<reference key="1">
    <citation type="online journal article" date="1995" name="Plant Gene Register">
        <title>Nucleotide sequence of a wheat cDNA encoding adenine phosphoribosyltransferase.</title>
        <authorList>
            <person name="Moffatt B.A."/>
            <person name="Schnorr K.S."/>
            <person name="Gaillard C."/>
            <person name="Biget E."/>
            <person name="Laloue M."/>
        </authorList>
        <locator>PGR95-030</locator>
    </citation>
    <scope>NUCLEOTIDE SEQUENCE [MRNA]</scope>
    <source>
        <strain>cv. Capitole</strain>
        <tissue>Seed</tissue>
    </source>
</reference>
<organism>
    <name type="scientific">Triticum aestivum</name>
    <name type="common">Wheat</name>
    <dbReference type="NCBI Taxonomy" id="4565"/>
    <lineage>
        <taxon>Eukaryota</taxon>
        <taxon>Viridiplantae</taxon>
        <taxon>Streptophyta</taxon>
        <taxon>Embryophyta</taxon>
        <taxon>Tracheophyta</taxon>
        <taxon>Spermatophyta</taxon>
        <taxon>Magnoliopsida</taxon>
        <taxon>Liliopsida</taxon>
        <taxon>Poales</taxon>
        <taxon>Poaceae</taxon>
        <taxon>BOP clade</taxon>
        <taxon>Pooideae</taxon>
        <taxon>Triticodae</taxon>
        <taxon>Triticeae</taxon>
        <taxon>Triticinae</taxon>
        <taxon>Triticum</taxon>
    </lineage>
</organism>
<protein>
    <recommendedName>
        <fullName>Adenine phosphoribosyltransferase 1</fullName>
        <shortName>APRT 1</shortName>
        <ecNumber>2.4.2.7</ecNumber>
    </recommendedName>
</protein>
<sequence>MASDGRVERIASSIRAIPNFPKPGILFQDITTLLLDPQAFRDTTDLFVERYKDKDITVVAGVEARGFIFGPPIALAIGAKFVPIRKPKKLPGEVISEEYSLEYGTDKIEMHVGAVQPNDRVLIVDDLIATGGTLCAAAKLIERVGAKVVECACVIELPELKGRDKLGDMPVFVLVQADESV</sequence>
<feature type="chain" id="PRO_0000149516" description="Adenine phosphoribosyltransferase 1">
    <location>
        <begin position="1"/>
        <end position="181"/>
    </location>
</feature>
<keyword id="KW-0963">Cytoplasm</keyword>
<keyword id="KW-0328">Glycosyltransferase</keyword>
<keyword id="KW-0660">Purine salvage</keyword>
<keyword id="KW-1185">Reference proteome</keyword>
<keyword id="KW-0808">Transferase</keyword>
<gene>
    <name type="primary">APT1</name>
</gene>
<proteinExistence type="evidence at transcript level"/>
<accession>Q43199</accession>
<comment type="function">
    <text>Catalyzes a salvage reaction resulting in the formation of AMP, that is energically less costly than de novo synthesis.</text>
</comment>
<comment type="catalytic activity">
    <reaction>
        <text>AMP + diphosphate = 5-phospho-alpha-D-ribose 1-diphosphate + adenine</text>
        <dbReference type="Rhea" id="RHEA:16609"/>
        <dbReference type="ChEBI" id="CHEBI:16708"/>
        <dbReference type="ChEBI" id="CHEBI:33019"/>
        <dbReference type="ChEBI" id="CHEBI:58017"/>
        <dbReference type="ChEBI" id="CHEBI:456215"/>
        <dbReference type="EC" id="2.4.2.7"/>
    </reaction>
</comment>
<comment type="pathway">
    <text>Purine metabolism; AMP biosynthesis via salvage pathway; AMP from adenine: step 1/1.</text>
</comment>
<comment type="subunit">
    <text evidence="1">Homodimer.</text>
</comment>
<comment type="subcellular location">
    <subcellularLocation>
        <location>Cytoplasm</location>
    </subcellularLocation>
</comment>
<comment type="similarity">
    <text evidence="2">Belongs to the purine/pyrimidine phosphoribosyltransferase family.</text>
</comment>
<dbReference type="EC" id="2.4.2.7"/>
<dbReference type="EMBL" id="U22442">
    <property type="protein sequence ID" value="AAA80609.1"/>
    <property type="molecule type" value="mRNA"/>
</dbReference>
<dbReference type="PIR" id="T06263">
    <property type="entry name" value="T06263"/>
</dbReference>
<dbReference type="SMR" id="Q43199"/>
<dbReference type="STRING" id="4565.Q43199"/>
<dbReference type="PaxDb" id="4565-Traes_5BS_1012AD486.1"/>
<dbReference type="EnsemblPlants" id="TraesJUL5A03G02611770.1">
    <property type="protein sequence ID" value="TraesJUL5A03G02611770.1"/>
    <property type="gene ID" value="TraesJUL5A03G02611770"/>
</dbReference>
<dbReference type="EnsemblPlants" id="TraesJUL5B03G02840780.1">
    <property type="protein sequence ID" value="TraesJUL5B03G02840780.1"/>
    <property type="gene ID" value="TraesJUL5B03G02840780"/>
</dbReference>
<dbReference type="EnsemblPlants" id="TraesKAR5A01G0049430.1">
    <property type="protein sequence ID" value="cds.TraesKAR5A01G0049430.1"/>
    <property type="gene ID" value="TraesKAR5A01G0049430"/>
</dbReference>
<dbReference type="EnsemblPlants" id="TraesLAC5A03G02545990.1">
    <property type="protein sequence ID" value="TraesLAC5A03G02545990.1"/>
    <property type="gene ID" value="TraesLAC5A03G02545990"/>
</dbReference>
<dbReference type="EnsemblPlants" id="TraesLAC5B03G02774790.1">
    <property type="protein sequence ID" value="TraesLAC5B03G02774790.1"/>
    <property type="gene ID" value="TraesLAC5B03G02774790"/>
</dbReference>
<dbReference type="EnsemblPlants" id="TraesLDM5B03G02823160.1">
    <property type="protein sequence ID" value="TraesLDM5B03G02823160.1"/>
    <property type="gene ID" value="TraesLDM5B03G02823160"/>
</dbReference>
<dbReference type="EnsemblPlants" id="TraesMAC5A03G02590520.1">
    <property type="protein sequence ID" value="TraesMAC5A03G02590520.1"/>
    <property type="gene ID" value="TraesMAC5A03G02590520"/>
</dbReference>
<dbReference type="EnsemblPlants" id="TraesNOR5A03G02611680.1">
    <property type="protein sequence ID" value="TraesNOR5A03G02611680.1"/>
    <property type="gene ID" value="TraesNOR5A03G02611680"/>
</dbReference>
<dbReference type="EnsemblPlants" id="TraesNOR5D03G03085180.1">
    <property type="protein sequence ID" value="TraesNOR5D03G03085180.1"/>
    <property type="gene ID" value="TraesNOR5D03G03085180"/>
</dbReference>
<dbReference type="EnsemblPlants" id="TraesPARA_EIv1.0_1610010.1">
    <property type="protein sequence ID" value="TraesPARA_EIv1.0_1610010.1.CDS"/>
    <property type="gene ID" value="TraesPARA_EIv1.0_1610010"/>
</dbReference>
<dbReference type="EnsemblPlants" id="TraesSTA5A03G02582940.1">
    <property type="protein sequence ID" value="TraesSTA5A03G02582940.1"/>
    <property type="gene ID" value="TraesSTA5A03G02582940"/>
</dbReference>
<dbReference type="EnsemblPlants" id="TraesSTA5B03G02812370.1">
    <property type="protein sequence ID" value="TraesSTA5B03G02812370.1"/>
    <property type="gene ID" value="TraesSTA5B03G02812370"/>
</dbReference>
<dbReference type="Gramene" id="TraesJUL5A03G02611770.1">
    <property type="protein sequence ID" value="TraesJUL5A03G02611770.1"/>
    <property type="gene ID" value="TraesJUL5A03G02611770"/>
</dbReference>
<dbReference type="Gramene" id="TraesJUL5B03G02840780.1">
    <property type="protein sequence ID" value="TraesJUL5B03G02840780.1"/>
    <property type="gene ID" value="TraesJUL5B03G02840780"/>
</dbReference>
<dbReference type="Gramene" id="TraesKAR5A01G0049430.1">
    <property type="protein sequence ID" value="cds.TraesKAR5A01G0049430.1"/>
    <property type="gene ID" value="TraesKAR5A01G0049430"/>
</dbReference>
<dbReference type="Gramene" id="TraesLAC5A03G02545990.1">
    <property type="protein sequence ID" value="TraesLAC5A03G02545990.1"/>
    <property type="gene ID" value="TraesLAC5A03G02545990"/>
</dbReference>
<dbReference type="Gramene" id="TraesLAC5B03G02774790.1">
    <property type="protein sequence ID" value="TraesLAC5B03G02774790.1"/>
    <property type="gene ID" value="TraesLAC5B03G02774790"/>
</dbReference>
<dbReference type="Gramene" id="TraesLDM5B03G02823160.1">
    <property type="protein sequence ID" value="TraesLDM5B03G02823160.1"/>
    <property type="gene ID" value="TraesLDM5B03G02823160"/>
</dbReference>
<dbReference type="Gramene" id="TraesMAC5A03G02590520.1">
    <property type="protein sequence ID" value="TraesMAC5A03G02590520.1"/>
    <property type="gene ID" value="TraesMAC5A03G02590520"/>
</dbReference>
<dbReference type="Gramene" id="TraesNOR5A03G02611680.1">
    <property type="protein sequence ID" value="TraesNOR5A03G02611680.1"/>
    <property type="gene ID" value="TraesNOR5A03G02611680"/>
</dbReference>
<dbReference type="Gramene" id="TraesNOR5D03G03085180.1">
    <property type="protein sequence ID" value="TraesNOR5D03G03085180.1"/>
    <property type="gene ID" value="TraesNOR5D03G03085180"/>
</dbReference>
<dbReference type="Gramene" id="TraesPARA_EIv1.0_1610010.1">
    <property type="protein sequence ID" value="TraesPARA_EIv1.0_1610010.1.CDS"/>
    <property type="gene ID" value="TraesPARA_EIv1.0_1610010"/>
</dbReference>
<dbReference type="Gramene" id="TraesSTA5A03G02582940.1">
    <property type="protein sequence ID" value="TraesSTA5A03G02582940.1"/>
    <property type="gene ID" value="TraesSTA5A03G02582940"/>
</dbReference>
<dbReference type="Gramene" id="TraesSTA5B03G02812370.1">
    <property type="protein sequence ID" value="TraesSTA5B03G02812370.1"/>
    <property type="gene ID" value="TraesSTA5B03G02812370"/>
</dbReference>
<dbReference type="eggNOG" id="KOG1712">
    <property type="taxonomic scope" value="Eukaryota"/>
</dbReference>
<dbReference type="BRENDA" id="2.4.2.7">
    <property type="organism ID" value="6500"/>
</dbReference>
<dbReference type="SABIO-RK" id="Q43199"/>
<dbReference type="UniPathway" id="UPA00588">
    <property type="reaction ID" value="UER00646"/>
</dbReference>
<dbReference type="Proteomes" id="UP000019116">
    <property type="component" value="Unplaced"/>
</dbReference>
<dbReference type="ExpressionAtlas" id="Q43199">
    <property type="expression patterns" value="baseline and differential"/>
</dbReference>
<dbReference type="GO" id="GO:0005829">
    <property type="term" value="C:cytosol"/>
    <property type="evidence" value="ECO:0000318"/>
    <property type="project" value="GO_Central"/>
</dbReference>
<dbReference type="GO" id="GO:0003999">
    <property type="term" value="F:adenine phosphoribosyltransferase activity"/>
    <property type="evidence" value="ECO:0000318"/>
    <property type="project" value="GO_Central"/>
</dbReference>
<dbReference type="GO" id="GO:0006168">
    <property type="term" value="P:adenine salvage"/>
    <property type="evidence" value="ECO:0007669"/>
    <property type="project" value="InterPro"/>
</dbReference>
<dbReference type="GO" id="GO:0044209">
    <property type="term" value="P:AMP salvage"/>
    <property type="evidence" value="ECO:0007669"/>
    <property type="project" value="UniProtKB-UniPathway"/>
</dbReference>
<dbReference type="GO" id="GO:0006166">
    <property type="term" value="P:purine ribonucleoside salvage"/>
    <property type="evidence" value="ECO:0007669"/>
    <property type="project" value="UniProtKB-KW"/>
</dbReference>
<dbReference type="CDD" id="cd06223">
    <property type="entry name" value="PRTases_typeI"/>
    <property type="match status" value="1"/>
</dbReference>
<dbReference type="FunFam" id="3.40.50.2020:FF:000022">
    <property type="entry name" value="Adenine phosphoribosyltransferase 1"/>
    <property type="match status" value="1"/>
</dbReference>
<dbReference type="Gene3D" id="3.40.50.2020">
    <property type="match status" value="1"/>
</dbReference>
<dbReference type="HAMAP" id="MF_00004">
    <property type="entry name" value="Aden_phosphoribosyltr"/>
    <property type="match status" value="1"/>
</dbReference>
<dbReference type="InterPro" id="IPR005764">
    <property type="entry name" value="Ade_phspho_trans"/>
</dbReference>
<dbReference type="InterPro" id="IPR050120">
    <property type="entry name" value="Adenine_PRTase"/>
</dbReference>
<dbReference type="InterPro" id="IPR000836">
    <property type="entry name" value="PRibTrfase_dom"/>
</dbReference>
<dbReference type="InterPro" id="IPR029057">
    <property type="entry name" value="PRTase-like"/>
</dbReference>
<dbReference type="NCBIfam" id="TIGR01090">
    <property type="entry name" value="apt"/>
    <property type="match status" value="1"/>
</dbReference>
<dbReference type="NCBIfam" id="NF002634">
    <property type="entry name" value="PRK02304.1-3"/>
    <property type="match status" value="1"/>
</dbReference>
<dbReference type="NCBIfam" id="NF002636">
    <property type="entry name" value="PRK02304.1-5"/>
    <property type="match status" value="1"/>
</dbReference>
<dbReference type="PANTHER" id="PTHR11776">
    <property type="entry name" value="ADENINE PHOSPHORIBOSYLTRANSFERASE"/>
    <property type="match status" value="1"/>
</dbReference>
<dbReference type="PANTHER" id="PTHR11776:SF0">
    <property type="entry name" value="ADENINE PHOSPHORIBOSYLTRANSFERASE 1, CHLOROPLASTIC"/>
    <property type="match status" value="1"/>
</dbReference>
<dbReference type="Pfam" id="PF00156">
    <property type="entry name" value="Pribosyltran"/>
    <property type="match status" value="1"/>
</dbReference>
<dbReference type="SUPFAM" id="SSF53271">
    <property type="entry name" value="PRTase-like"/>
    <property type="match status" value="1"/>
</dbReference>
<dbReference type="PROSITE" id="PS00103">
    <property type="entry name" value="PUR_PYR_PR_TRANSFER"/>
    <property type="match status" value="1"/>
</dbReference>
<name>APT1_WHEAT</name>
<evidence type="ECO:0000250" key="1"/>
<evidence type="ECO:0000305" key="2"/>